<dbReference type="EC" id="2.4.1.-" evidence="1"/>
<dbReference type="EC" id="2.4.1.173" evidence="1"/>
<dbReference type="EMBL" id="AAHF01000008">
    <property type="protein sequence ID" value="EAL87319.1"/>
    <property type="status" value="ALT_SEQ"/>
    <property type="molecule type" value="Genomic_DNA"/>
</dbReference>
<dbReference type="RefSeq" id="XP_749357.1">
    <property type="nucleotide sequence ID" value="XM_744264.1"/>
</dbReference>
<dbReference type="SMR" id="Q4WID6"/>
<dbReference type="FunCoup" id="Q4WID6">
    <property type="interactions" value="92"/>
</dbReference>
<dbReference type="STRING" id="330879.Q4WID6"/>
<dbReference type="GeneID" id="3507158"/>
<dbReference type="KEGG" id="afm:AFUA_2G02220"/>
<dbReference type="VEuPathDB" id="FungiDB:Afu2g02220"/>
<dbReference type="eggNOG" id="KOG1192">
    <property type="taxonomic scope" value="Eukaryota"/>
</dbReference>
<dbReference type="HOGENOM" id="CLU_000537_6_0_1"/>
<dbReference type="InParanoid" id="Q4WID6"/>
<dbReference type="OrthoDB" id="10261837at2759"/>
<dbReference type="Proteomes" id="UP000002530">
    <property type="component" value="Chromosome 2"/>
</dbReference>
<dbReference type="GO" id="GO:0034045">
    <property type="term" value="C:phagophore assembly site membrane"/>
    <property type="evidence" value="ECO:0007669"/>
    <property type="project" value="UniProtKB-SubCell"/>
</dbReference>
<dbReference type="GO" id="GO:0016906">
    <property type="term" value="F:sterol 3-beta-glucosyltransferase activity"/>
    <property type="evidence" value="ECO:0007669"/>
    <property type="project" value="UniProtKB-EC"/>
</dbReference>
<dbReference type="GO" id="GO:0008194">
    <property type="term" value="F:UDP-glycosyltransferase activity"/>
    <property type="evidence" value="ECO:0000318"/>
    <property type="project" value="GO_Central"/>
</dbReference>
<dbReference type="GO" id="GO:0006914">
    <property type="term" value="P:autophagy"/>
    <property type="evidence" value="ECO:0007669"/>
    <property type="project" value="UniProtKB-KW"/>
</dbReference>
<dbReference type="GO" id="GO:0005975">
    <property type="term" value="P:carbohydrate metabolic process"/>
    <property type="evidence" value="ECO:0007669"/>
    <property type="project" value="InterPro"/>
</dbReference>
<dbReference type="GO" id="GO:0030259">
    <property type="term" value="P:lipid glycosylation"/>
    <property type="evidence" value="ECO:0007669"/>
    <property type="project" value="InterPro"/>
</dbReference>
<dbReference type="GO" id="GO:0015031">
    <property type="term" value="P:protein transport"/>
    <property type="evidence" value="ECO:0007669"/>
    <property type="project" value="UniProtKB-KW"/>
</dbReference>
<dbReference type="GO" id="GO:0016126">
    <property type="term" value="P:sterol biosynthetic process"/>
    <property type="evidence" value="ECO:0007669"/>
    <property type="project" value="UniProtKB-KW"/>
</dbReference>
<dbReference type="GO" id="GO:0016125">
    <property type="term" value="P:sterol metabolic process"/>
    <property type="evidence" value="ECO:0000318"/>
    <property type="project" value="GO_Central"/>
</dbReference>
<dbReference type="CDD" id="cd03784">
    <property type="entry name" value="GT1_Gtf-like"/>
    <property type="match status" value="1"/>
</dbReference>
<dbReference type="CDD" id="cd13215">
    <property type="entry name" value="PH-GRAM1_AGT26"/>
    <property type="match status" value="1"/>
</dbReference>
<dbReference type="CDD" id="cd13216">
    <property type="entry name" value="PH-GRAM2_AGT26"/>
    <property type="match status" value="1"/>
</dbReference>
<dbReference type="FunFam" id="2.30.29.30:FF:000303">
    <property type="entry name" value="Sterol 3-beta-glucosyltransferase"/>
    <property type="match status" value="1"/>
</dbReference>
<dbReference type="FunFam" id="2.30.29.30:FF:000560">
    <property type="entry name" value="Sterol 3-beta-glucosyltransferase"/>
    <property type="match status" value="1"/>
</dbReference>
<dbReference type="FunFam" id="3.40.50.2000:FF:000029">
    <property type="entry name" value="Sterol 3-beta-glucosyltransferase"/>
    <property type="match status" value="1"/>
</dbReference>
<dbReference type="FunFam" id="3.40.50.2000:FF:000009">
    <property type="entry name" value="Sterol 3-beta-glucosyltransferase UGT80A2"/>
    <property type="match status" value="1"/>
</dbReference>
<dbReference type="Gene3D" id="3.40.50.2000">
    <property type="entry name" value="Glycogen Phosphorylase B"/>
    <property type="match status" value="2"/>
</dbReference>
<dbReference type="Gene3D" id="2.30.29.30">
    <property type="entry name" value="Pleckstrin-homology domain (PH domain)/Phosphotyrosine-binding domain (PTB)"/>
    <property type="match status" value="3"/>
</dbReference>
<dbReference type="InterPro" id="IPR048066">
    <property type="entry name" value="ATG26_PH_GRAM1"/>
</dbReference>
<dbReference type="InterPro" id="IPR048065">
    <property type="entry name" value="ATG26_PH_GRAM2"/>
</dbReference>
<dbReference type="InterPro" id="IPR010610">
    <property type="entry name" value="EryCIII-like_C"/>
</dbReference>
<dbReference type="InterPro" id="IPR050426">
    <property type="entry name" value="Glycosyltransferase_28"/>
</dbReference>
<dbReference type="InterPro" id="IPR004276">
    <property type="entry name" value="GlycoTrans_28_N"/>
</dbReference>
<dbReference type="InterPro" id="IPR004182">
    <property type="entry name" value="GRAM"/>
</dbReference>
<dbReference type="InterPro" id="IPR011993">
    <property type="entry name" value="PH-like_dom_sf"/>
</dbReference>
<dbReference type="InterPro" id="IPR001849">
    <property type="entry name" value="PH_domain"/>
</dbReference>
<dbReference type="InterPro" id="IPR002213">
    <property type="entry name" value="UDP_glucos_trans"/>
</dbReference>
<dbReference type="PANTHER" id="PTHR48050">
    <property type="entry name" value="STEROL 3-BETA-GLUCOSYLTRANSFERASE"/>
    <property type="match status" value="1"/>
</dbReference>
<dbReference type="PANTHER" id="PTHR48050:SF25">
    <property type="entry name" value="STEROL 3-BETA-GLUCOSYLTRANSFERASE"/>
    <property type="match status" value="1"/>
</dbReference>
<dbReference type="Pfam" id="PF06722">
    <property type="entry name" value="EryCIII-like_C"/>
    <property type="match status" value="1"/>
</dbReference>
<dbReference type="Pfam" id="PF03033">
    <property type="entry name" value="Glyco_transf_28"/>
    <property type="match status" value="1"/>
</dbReference>
<dbReference type="Pfam" id="PF02893">
    <property type="entry name" value="GRAM"/>
    <property type="match status" value="2"/>
</dbReference>
<dbReference type="Pfam" id="PF00169">
    <property type="entry name" value="PH"/>
    <property type="match status" value="1"/>
</dbReference>
<dbReference type="SMART" id="SM00568">
    <property type="entry name" value="GRAM"/>
    <property type="match status" value="2"/>
</dbReference>
<dbReference type="SMART" id="SM00233">
    <property type="entry name" value="PH"/>
    <property type="match status" value="1"/>
</dbReference>
<dbReference type="SUPFAM" id="SSF50729">
    <property type="entry name" value="PH domain-like"/>
    <property type="match status" value="1"/>
</dbReference>
<dbReference type="SUPFAM" id="SSF53756">
    <property type="entry name" value="UDP-Glycosyltransferase/glycogen phosphorylase"/>
    <property type="match status" value="1"/>
</dbReference>
<dbReference type="PROSITE" id="PS50003">
    <property type="entry name" value="PH_DOMAIN"/>
    <property type="match status" value="1"/>
</dbReference>
<accession>Q4WID6</accession>
<comment type="function">
    <text evidence="1">Sterol glycosyltransferase responsible for the glycosylation of ergosterol to form ergosterol-glucoside.</text>
</comment>
<comment type="catalytic activity">
    <reaction evidence="1">
        <text>a sterol + UDP-alpha-D-glucose = a sterol 3-beta-D-glucoside + UDP + H(+)</text>
        <dbReference type="Rhea" id="RHEA:22724"/>
        <dbReference type="ChEBI" id="CHEBI:15378"/>
        <dbReference type="ChEBI" id="CHEBI:15889"/>
        <dbReference type="ChEBI" id="CHEBI:37424"/>
        <dbReference type="ChEBI" id="CHEBI:58223"/>
        <dbReference type="ChEBI" id="CHEBI:58885"/>
        <dbReference type="EC" id="2.4.1.173"/>
    </reaction>
    <physiologicalReaction direction="left-to-right" evidence="1">
        <dbReference type="Rhea" id="RHEA:22725"/>
    </physiologicalReaction>
</comment>
<comment type="catalytic activity">
    <reaction evidence="1">
        <text>ergosterol + UDP-alpha-D-glucose = ergosteryl 3-beta-D-glucoside + UDP + H(+)</text>
        <dbReference type="Rhea" id="RHEA:61836"/>
        <dbReference type="ChEBI" id="CHEBI:15378"/>
        <dbReference type="ChEBI" id="CHEBI:16933"/>
        <dbReference type="ChEBI" id="CHEBI:52973"/>
        <dbReference type="ChEBI" id="CHEBI:58223"/>
        <dbReference type="ChEBI" id="CHEBI:58885"/>
    </reaction>
    <physiologicalReaction direction="left-to-right" evidence="1">
        <dbReference type="Rhea" id="RHEA:61837"/>
    </physiologicalReaction>
</comment>
<comment type="subcellular location">
    <subcellularLocation>
        <location evidence="1">Cytoplasm</location>
    </subcellularLocation>
    <subcellularLocation>
        <location evidence="2">Preautophagosomal structure membrane</location>
        <topology evidence="2">Peripheral membrane protein</topology>
    </subcellularLocation>
</comment>
<comment type="domain">
    <text evidence="2">The GRAM and PH domains are required for the localization of ATG26 to the preautophagosomal structure (PAS) and are involved in autophagy (By similarity).</text>
</comment>
<comment type="similarity">
    <text evidence="6">Belongs to the glycosyltransferase 28 family.</text>
</comment>
<comment type="sequence caution" evidence="6">
    <conflict type="erroneous gene model prediction">
        <sequence resource="EMBL-CDS" id="EAL87319"/>
    </conflict>
</comment>
<reference key="1">
    <citation type="journal article" date="2005" name="Nature">
        <title>Genomic sequence of the pathogenic and allergenic filamentous fungus Aspergillus fumigatus.</title>
        <authorList>
            <person name="Nierman W.C."/>
            <person name="Pain A."/>
            <person name="Anderson M.J."/>
            <person name="Wortman J.R."/>
            <person name="Kim H.S."/>
            <person name="Arroyo J."/>
            <person name="Berriman M."/>
            <person name="Abe K."/>
            <person name="Archer D.B."/>
            <person name="Bermejo C."/>
            <person name="Bennett J.W."/>
            <person name="Bowyer P."/>
            <person name="Chen D."/>
            <person name="Collins M."/>
            <person name="Coulsen R."/>
            <person name="Davies R."/>
            <person name="Dyer P.S."/>
            <person name="Farman M.L."/>
            <person name="Fedorova N."/>
            <person name="Fedorova N.D."/>
            <person name="Feldblyum T.V."/>
            <person name="Fischer R."/>
            <person name="Fosker N."/>
            <person name="Fraser A."/>
            <person name="Garcia J.L."/>
            <person name="Garcia M.J."/>
            <person name="Goble A."/>
            <person name="Goldman G.H."/>
            <person name="Gomi K."/>
            <person name="Griffith-Jones S."/>
            <person name="Gwilliam R."/>
            <person name="Haas B.J."/>
            <person name="Haas H."/>
            <person name="Harris D.E."/>
            <person name="Horiuchi H."/>
            <person name="Huang J."/>
            <person name="Humphray S."/>
            <person name="Jimenez J."/>
            <person name="Keller N."/>
            <person name="Khouri H."/>
            <person name="Kitamoto K."/>
            <person name="Kobayashi T."/>
            <person name="Konzack S."/>
            <person name="Kulkarni R."/>
            <person name="Kumagai T."/>
            <person name="Lafton A."/>
            <person name="Latge J.-P."/>
            <person name="Li W."/>
            <person name="Lord A."/>
            <person name="Lu C."/>
            <person name="Majoros W.H."/>
            <person name="May G.S."/>
            <person name="Miller B.L."/>
            <person name="Mohamoud Y."/>
            <person name="Molina M."/>
            <person name="Monod M."/>
            <person name="Mouyna I."/>
            <person name="Mulligan S."/>
            <person name="Murphy L.D."/>
            <person name="O'Neil S."/>
            <person name="Paulsen I."/>
            <person name="Penalva M.A."/>
            <person name="Pertea M."/>
            <person name="Price C."/>
            <person name="Pritchard B.L."/>
            <person name="Quail M.A."/>
            <person name="Rabbinowitsch E."/>
            <person name="Rawlins N."/>
            <person name="Rajandream M.A."/>
            <person name="Reichard U."/>
            <person name="Renauld H."/>
            <person name="Robson G.D."/>
            <person name="Rodriguez de Cordoba S."/>
            <person name="Rodriguez-Pena J.M."/>
            <person name="Ronning C.M."/>
            <person name="Rutter S."/>
            <person name="Salzberg S.L."/>
            <person name="Sanchez M."/>
            <person name="Sanchez-Ferrero J.C."/>
            <person name="Saunders D."/>
            <person name="Seeger K."/>
            <person name="Squares R."/>
            <person name="Squares S."/>
            <person name="Takeuchi M."/>
            <person name="Tekaia F."/>
            <person name="Turner G."/>
            <person name="Vazquez de Aldana C.R."/>
            <person name="Weidman J."/>
            <person name="White O."/>
            <person name="Woodward J.R."/>
            <person name="Yu J.-H."/>
            <person name="Fraser C.M."/>
            <person name="Galagan J.E."/>
            <person name="Asai K."/>
            <person name="Machida M."/>
            <person name="Hall N."/>
            <person name="Barrell B.G."/>
            <person name="Denning D.W."/>
        </authorList>
    </citation>
    <scope>NUCLEOTIDE SEQUENCE [LARGE SCALE GENOMIC DNA]</scope>
    <source>
        <strain>ATCC MYA-4609 / CBS 101355 / FGSC A1100 / Af293</strain>
    </source>
</reference>
<sequence>MRPFLDDAKRRVDRKLSARRQSLSASRFLPSALPDRLKDNHDAQVDFTAPPGGSGSREGHLQYMQQSIFGMIAAVGSRSDFHARFDESSDSDGETGQRPRKESSVRKGTSVSVNTSSLDPSQRSSSQTDGNSEKDLGTRGRRHRRTISDHKLLRPFMSNSKHEPDPSTGDEMPTVSPPSRPRSATPRAAPILSRMVEAQAQFDLKASSTERSQSSLNETGAKGPRDASVSPLSTRLMDMFGFDKPEKVLVEYACSLLQSMLLQGYMYVTEGHICFYAYLPKKSTVAIKSGYLHKRGRKNPKYSRYWFSLKGDVLSYYADPSNLYFPSGHVDLRYGISASLGDPKEKGREPRDFQVTTDQRTYYFRADSAMSAKEWVKALQKVIFRTHNEGESVKISFPIESIIDIEESPMVDFAETFKIRVIEDDDSYAIDEYFFTFFNSGREAFEFLKILINDQSLKISSQHLSPQPDRSPRSDRTRKSRNRWSLTSGTSRAETQRKRSASTSHMSLAHDIVKSSPATRHQDSSDSILNSFEQATESSAAWQSITDAAESASQILNRSDVFQSPTIYGLDRRPSGRERRGRRNSDETARSPSTRVNVGTGQQIDELDRRTDGNTSGREARDTTSESDQYTQDPTKSFSGAPSLNELVKAGVYPLQRAAGLAEYLRTRSKQMSNLLASESMGYIEKVSGMWTGGRKHYGEAEDVLPDDQDVDPEDKEDGCNYGDRFRAHFALPPTEKLQATYFAYLHRVLPLYGKIYVSQKKLCFRSLIPGTRTKMILPLRDIENVEKEKGFRFGYHGLVIIIRGHEELFFEFRTSDARDDCAVTLHQHLEAVKFMAESGLLAEQEQNESEAAMTEHRMLQEARYYDYGENDLRPLNESSELHPIFDDPRASIVNFKPAESLRITCLTIGSRGDVQPYIALCKGLLAEGHRPKIATHAEFEPWVRKHGIDFAPVEGDPAELMRICVENGMFTYSFLKEASQKFRGWIDDLLSSAWASCQDSDLLIESPSAMAGIHIAEALRIPYFRAFTMPWSRTRAYPHAFAVPEHRMGGAYNYITYVMFDNVFWKAIAGQVNRWRKNELGLKATTLDKMQPNKVPFLYNYSPSVVPPPLDYPDWIRITGYWFLNEGSDWTPPTALSEFIHRAREDGKKIVYIGFGSIVVSDPSALTKTVIESVLKADVRCILSKGWSDRLGDPASAKPEVPLPSEIHQIQAAPHDWLFSHIDAAVHHGGAGTTGASLRAGVPTIIKPFFGDQFFFGSRVEDLGVGICMKKLNVSVFSRALWEATHSERMIIRAQDLGARIRSEDGVATAIQAIYRDLEYAKTLARQRSIASSTPFSPTPSAKTAAEQDADDDVEDSEEWTFVGDDTDVEMSRRLRDRAISDADMLPDRLLANSVPGDSGPGRN</sequence>
<evidence type="ECO:0000250" key="1">
    <source>
        <dbReference type="UniProtKB" id="Q06321"/>
    </source>
</evidence>
<evidence type="ECO:0000250" key="2">
    <source>
        <dbReference type="UniProtKB" id="Q2U0C3"/>
    </source>
</evidence>
<evidence type="ECO:0000255" key="3"/>
<evidence type="ECO:0000255" key="4">
    <source>
        <dbReference type="PROSITE-ProRule" id="PRU00145"/>
    </source>
</evidence>
<evidence type="ECO:0000256" key="5">
    <source>
        <dbReference type="SAM" id="MobiDB-lite"/>
    </source>
</evidence>
<evidence type="ECO:0000305" key="6"/>
<feature type="chain" id="PRO_0000318040" description="Sterol 3-beta-glucosyltransferase">
    <location>
        <begin position="1"/>
        <end position="1405"/>
    </location>
</feature>
<feature type="domain" description="GRAM 1" evidence="3">
    <location>
        <begin position="246"/>
        <end position="285"/>
    </location>
</feature>
<feature type="domain" description="PH" evidence="4">
    <location>
        <begin position="285"/>
        <end position="384"/>
    </location>
</feature>
<feature type="domain" description="GRAM 2" evidence="3">
    <location>
        <begin position="724"/>
        <end position="790"/>
    </location>
</feature>
<feature type="region of interest" description="Disordered" evidence="5">
    <location>
        <begin position="1"/>
        <end position="27"/>
    </location>
</feature>
<feature type="region of interest" description="Disordered" evidence="5">
    <location>
        <begin position="83"/>
        <end position="186"/>
    </location>
</feature>
<feature type="region of interest" description="Disordered" evidence="5">
    <location>
        <begin position="203"/>
        <end position="230"/>
    </location>
</feature>
<feature type="region of interest" description="Disordered" evidence="5">
    <location>
        <begin position="461"/>
        <end position="526"/>
    </location>
</feature>
<feature type="region of interest" description="Disordered" evidence="5">
    <location>
        <begin position="566"/>
        <end position="642"/>
    </location>
</feature>
<feature type="region of interest" description="Disordered" evidence="5">
    <location>
        <begin position="1330"/>
        <end position="1367"/>
    </location>
</feature>
<feature type="compositionally biased region" description="Basic and acidic residues" evidence="5">
    <location>
        <begin position="1"/>
        <end position="16"/>
    </location>
</feature>
<feature type="compositionally biased region" description="Basic and acidic residues" evidence="5">
    <location>
        <begin position="95"/>
        <end position="105"/>
    </location>
</feature>
<feature type="compositionally biased region" description="Polar residues" evidence="5">
    <location>
        <begin position="106"/>
        <end position="115"/>
    </location>
</feature>
<feature type="compositionally biased region" description="Low complexity" evidence="5">
    <location>
        <begin position="116"/>
        <end position="126"/>
    </location>
</feature>
<feature type="compositionally biased region" description="Polar residues" evidence="5">
    <location>
        <begin position="206"/>
        <end position="218"/>
    </location>
</feature>
<feature type="compositionally biased region" description="Polar residues" evidence="5">
    <location>
        <begin position="483"/>
        <end position="493"/>
    </location>
</feature>
<feature type="compositionally biased region" description="Basic and acidic residues" evidence="5">
    <location>
        <begin position="570"/>
        <end position="589"/>
    </location>
</feature>
<feature type="compositionally biased region" description="Polar residues" evidence="5">
    <location>
        <begin position="590"/>
        <end position="603"/>
    </location>
</feature>
<feature type="compositionally biased region" description="Basic and acidic residues" evidence="5">
    <location>
        <begin position="606"/>
        <end position="624"/>
    </location>
</feature>
<feature type="compositionally biased region" description="Polar residues" evidence="5">
    <location>
        <begin position="626"/>
        <end position="642"/>
    </location>
</feature>
<feature type="compositionally biased region" description="Low complexity" evidence="5">
    <location>
        <begin position="1332"/>
        <end position="1348"/>
    </location>
</feature>
<feature type="compositionally biased region" description="Acidic residues" evidence="5">
    <location>
        <begin position="1349"/>
        <end position="1367"/>
    </location>
</feature>
<feature type="binding site" evidence="1">
    <location>
        <position position="911"/>
    </location>
    <ligand>
        <name>UDP-alpha-D-glucose</name>
        <dbReference type="ChEBI" id="CHEBI:58885"/>
    </ligand>
</feature>
<feature type="binding site" evidence="1">
    <location>
        <position position="912"/>
    </location>
    <ligand>
        <name>UDP-alpha-D-glucose</name>
        <dbReference type="ChEBI" id="CHEBI:58885"/>
    </ligand>
</feature>
<feature type="binding site" evidence="1">
    <location>
        <position position="914"/>
    </location>
    <ligand>
        <name>UDP-alpha-D-glucose</name>
        <dbReference type="ChEBI" id="CHEBI:58885"/>
    </ligand>
</feature>
<feature type="binding site" evidence="1">
    <location>
        <position position="1214"/>
    </location>
    <ligand>
        <name>UDP-alpha-D-glucose</name>
        <dbReference type="ChEBI" id="CHEBI:58885"/>
    </ligand>
</feature>
<feature type="binding site" evidence="1">
    <location>
        <position position="1216"/>
    </location>
    <ligand>
        <name>UDP-alpha-D-glucose</name>
        <dbReference type="ChEBI" id="CHEBI:58885"/>
    </ligand>
</feature>
<feature type="binding site" evidence="1">
    <location>
        <position position="1229"/>
    </location>
    <ligand>
        <name>UDP-alpha-D-glucose</name>
        <dbReference type="ChEBI" id="CHEBI:58885"/>
    </ligand>
</feature>
<feature type="binding site" evidence="1">
    <location>
        <position position="1233"/>
    </location>
    <ligand>
        <name>UDP-alpha-D-glucose</name>
        <dbReference type="ChEBI" id="CHEBI:58885"/>
    </ligand>
</feature>
<feature type="binding site" evidence="1">
    <location>
        <position position="1234"/>
    </location>
    <ligand>
        <name>UDP-alpha-D-glucose</name>
        <dbReference type="ChEBI" id="CHEBI:58885"/>
    </ligand>
</feature>
<feature type="binding site" evidence="1">
    <location>
        <position position="1253"/>
    </location>
    <ligand>
        <name>UDP-alpha-D-glucose</name>
        <dbReference type="ChEBI" id="CHEBI:58885"/>
    </ligand>
</feature>
<feature type="binding site" evidence="1">
    <location>
        <position position="1254"/>
    </location>
    <ligand>
        <name>UDP-alpha-D-glucose</name>
        <dbReference type="ChEBI" id="CHEBI:58885"/>
    </ligand>
</feature>
<protein>
    <recommendedName>
        <fullName evidence="6">Sterol 3-beta-glucosyltransferase</fullName>
        <ecNumber evidence="1">2.4.1.-</ecNumber>
        <ecNumber evidence="1">2.4.1.173</ecNumber>
    </recommendedName>
    <alternativeName>
        <fullName evidence="1">Autophagy-related protein 26</fullName>
    </alternativeName>
</protein>
<keyword id="KW-0072">Autophagy</keyword>
<keyword id="KW-0963">Cytoplasm</keyword>
<keyword id="KW-0328">Glycosyltransferase</keyword>
<keyword id="KW-0444">Lipid biosynthesis</keyword>
<keyword id="KW-0443">Lipid metabolism</keyword>
<keyword id="KW-0472">Membrane</keyword>
<keyword id="KW-0653">Protein transport</keyword>
<keyword id="KW-1185">Reference proteome</keyword>
<keyword id="KW-0677">Repeat</keyword>
<keyword id="KW-0752">Steroid biosynthesis</keyword>
<keyword id="KW-0753">Steroid metabolism</keyword>
<keyword id="KW-0756">Sterol biosynthesis</keyword>
<keyword id="KW-1207">Sterol metabolism</keyword>
<keyword id="KW-0808">Transferase</keyword>
<keyword id="KW-0813">Transport</keyword>
<organism>
    <name type="scientific">Aspergillus fumigatus (strain ATCC MYA-4609 / CBS 101355 / FGSC A1100 / Af293)</name>
    <name type="common">Neosartorya fumigata</name>
    <dbReference type="NCBI Taxonomy" id="330879"/>
    <lineage>
        <taxon>Eukaryota</taxon>
        <taxon>Fungi</taxon>
        <taxon>Dikarya</taxon>
        <taxon>Ascomycota</taxon>
        <taxon>Pezizomycotina</taxon>
        <taxon>Eurotiomycetes</taxon>
        <taxon>Eurotiomycetidae</taxon>
        <taxon>Eurotiales</taxon>
        <taxon>Aspergillaceae</taxon>
        <taxon>Aspergillus</taxon>
        <taxon>Aspergillus subgen. Fumigati</taxon>
    </lineage>
</organism>
<gene>
    <name evidence="1" type="primary">atg26</name>
    <name type="ORF">AFUA_2G02220</name>
</gene>
<proteinExistence type="inferred from homology"/>
<name>ATG26_ASPFU</name>